<protein>
    <recommendedName>
        <fullName evidence="1">UDP-3-O-acyl-N-acetylglucosamine deacetylase</fullName>
        <shortName evidence="1">UDP-3-O-acyl-GlcNAc deacetylase</shortName>
        <ecNumber evidence="1">3.5.1.108</ecNumber>
    </recommendedName>
    <alternativeName>
        <fullName evidence="1">UDP-3-O-[R-3-hydroxymyristoyl]-N-acetylglucosamine deacetylase</fullName>
    </alternativeName>
</protein>
<organism>
    <name type="scientific">Shewanella sp. (strain MR-7)</name>
    <dbReference type="NCBI Taxonomy" id="60481"/>
    <lineage>
        <taxon>Bacteria</taxon>
        <taxon>Pseudomonadati</taxon>
        <taxon>Pseudomonadota</taxon>
        <taxon>Gammaproteobacteria</taxon>
        <taxon>Alteromonadales</taxon>
        <taxon>Shewanellaceae</taxon>
        <taxon>Shewanella</taxon>
    </lineage>
</organism>
<sequence length="306" mass="33650">MIFQRTVQKMVKATGVGLHSGNKVTLSIMPAPVNTGIVLVRTDMNPAVAIPAKAEQVRETTMCTALVNDEGIRISTIEHLFAALAGLGIDNAVIEVDAPEIPIMDGSASPFVFLLQSAGIKEQAAPKKYLKIKRPVRVEDGDKWAELKPFKGFRVNFKIDFAHPEIARSQQHVVMDFSTSAFVKDISRARTFGFMRDIEYLRANNLALGGSMENAVVLDEYRVLNPDGLRYEDEFVKHKILDAFGDLYVAGHAILGEFTAYKTGHALNNQLVRALLAQQDAWELVSFEKEADVPVSFTVPGGAVYA</sequence>
<comment type="function">
    <text evidence="1">Catalyzes the hydrolysis of UDP-3-O-myristoyl-N-acetylglucosamine to form UDP-3-O-myristoylglucosamine and acetate, the committed step in lipid A biosynthesis.</text>
</comment>
<comment type="catalytic activity">
    <reaction evidence="1">
        <text>a UDP-3-O-[(3R)-3-hydroxyacyl]-N-acetyl-alpha-D-glucosamine + H2O = a UDP-3-O-[(3R)-3-hydroxyacyl]-alpha-D-glucosamine + acetate</text>
        <dbReference type="Rhea" id="RHEA:67816"/>
        <dbReference type="ChEBI" id="CHEBI:15377"/>
        <dbReference type="ChEBI" id="CHEBI:30089"/>
        <dbReference type="ChEBI" id="CHEBI:137740"/>
        <dbReference type="ChEBI" id="CHEBI:173225"/>
        <dbReference type="EC" id="3.5.1.108"/>
    </reaction>
</comment>
<comment type="cofactor">
    <cofactor evidence="1">
        <name>Zn(2+)</name>
        <dbReference type="ChEBI" id="CHEBI:29105"/>
    </cofactor>
</comment>
<comment type="pathway">
    <text evidence="1">Glycolipid biosynthesis; lipid IV(A) biosynthesis; lipid IV(A) from (3R)-3-hydroxytetradecanoyl-[acyl-carrier-protein] and UDP-N-acetyl-alpha-D-glucosamine: step 2/6.</text>
</comment>
<comment type="similarity">
    <text evidence="1">Belongs to the LpxC family.</text>
</comment>
<reference key="1">
    <citation type="submission" date="2006-08" db="EMBL/GenBank/DDBJ databases">
        <title>Complete sequence of chromosome 1 of Shewanella sp. MR-7.</title>
        <authorList>
            <person name="Copeland A."/>
            <person name="Lucas S."/>
            <person name="Lapidus A."/>
            <person name="Barry K."/>
            <person name="Detter J.C."/>
            <person name="Glavina del Rio T."/>
            <person name="Hammon N."/>
            <person name="Israni S."/>
            <person name="Dalin E."/>
            <person name="Tice H."/>
            <person name="Pitluck S."/>
            <person name="Kiss H."/>
            <person name="Brettin T."/>
            <person name="Bruce D."/>
            <person name="Han C."/>
            <person name="Tapia R."/>
            <person name="Gilna P."/>
            <person name="Schmutz J."/>
            <person name="Larimer F."/>
            <person name="Land M."/>
            <person name="Hauser L."/>
            <person name="Kyrpides N."/>
            <person name="Mikhailova N."/>
            <person name="Nealson K."/>
            <person name="Konstantinidis K."/>
            <person name="Klappenbach J."/>
            <person name="Tiedje J."/>
            <person name="Richardson P."/>
        </authorList>
    </citation>
    <scope>NUCLEOTIDE SEQUENCE [LARGE SCALE GENOMIC DNA]</scope>
    <source>
        <strain>MR-7</strain>
    </source>
</reference>
<accession>Q0HZR1</accession>
<gene>
    <name evidence="1" type="primary">lpxC</name>
    <name type="ordered locus">Shewmr7_0391</name>
</gene>
<proteinExistence type="inferred from homology"/>
<name>LPXC_SHESR</name>
<evidence type="ECO:0000255" key="1">
    <source>
        <dbReference type="HAMAP-Rule" id="MF_00388"/>
    </source>
</evidence>
<feature type="chain" id="PRO_1000013234" description="UDP-3-O-acyl-N-acetylglucosamine deacetylase">
    <location>
        <begin position="1"/>
        <end position="306"/>
    </location>
</feature>
<feature type="active site" description="Proton donor" evidence="1">
    <location>
        <position position="265"/>
    </location>
</feature>
<feature type="binding site" evidence="1">
    <location>
        <position position="79"/>
    </location>
    <ligand>
        <name>Zn(2+)</name>
        <dbReference type="ChEBI" id="CHEBI:29105"/>
    </ligand>
</feature>
<feature type="binding site" evidence="1">
    <location>
        <position position="238"/>
    </location>
    <ligand>
        <name>Zn(2+)</name>
        <dbReference type="ChEBI" id="CHEBI:29105"/>
    </ligand>
</feature>
<feature type="binding site" evidence="1">
    <location>
        <position position="242"/>
    </location>
    <ligand>
        <name>Zn(2+)</name>
        <dbReference type="ChEBI" id="CHEBI:29105"/>
    </ligand>
</feature>
<keyword id="KW-0378">Hydrolase</keyword>
<keyword id="KW-0441">Lipid A biosynthesis</keyword>
<keyword id="KW-0444">Lipid biosynthesis</keyword>
<keyword id="KW-0443">Lipid metabolism</keyword>
<keyword id="KW-0479">Metal-binding</keyword>
<keyword id="KW-0862">Zinc</keyword>
<dbReference type="EC" id="3.5.1.108" evidence="1"/>
<dbReference type="EMBL" id="CP000444">
    <property type="protein sequence ID" value="ABI41394.1"/>
    <property type="molecule type" value="Genomic_DNA"/>
</dbReference>
<dbReference type="SMR" id="Q0HZR1"/>
<dbReference type="KEGG" id="shm:Shewmr7_0391"/>
<dbReference type="HOGENOM" id="CLU_046528_1_0_6"/>
<dbReference type="UniPathway" id="UPA00359">
    <property type="reaction ID" value="UER00478"/>
</dbReference>
<dbReference type="GO" id="GO:0016020">
    <property type="term" value="C:membrane"/>
    <property type="evidence" value="ECO:0007669"/>
    <property type="project" value="GOC"/>
</dbReference>
<dbReference type="GO" id="GO:0046872">
    <property type="term" value="F:metal ion binding"/>
    <property type="evidence" value="ECO:0007669"/>
    <property type="project" value="UniProtKB-KW"/>
</dbReference>
<dbReference type="GO" id="GO:0103117">
    <property type="term" value="F:UDP-3-O-acyl-N-acetylglucosamine deacetylase activity"/>
    <property type="evidence" value="ECO:0007669"/>
    <property type="project" value="UniProtKB-UniRule"/>
</dbReference>
<dbReference type="GO" id="GO:0009245">
    <property type="term" value="P:lipid A biosynthetic process"/>
    <property type="evidence" value="ECO:0007669"/>
    <property type="project" value="UniProtKB-UniRule"/>
</dbReference>
<dbReference type="Gene3D" id="3.30.230.20">
    <property type="entry name" value="lpxc deacetylase, domain 1"/>
    <property type="match status" value="1"/>
</dbReference>
<dbReference type="Gene3D" id="3.30.1700.10">
    <property type="entry name" value="lpxc deacetylase, domain 2"/>
    <property type="match status" value="1"/>
</dbReference>
<dbReference type="HAMAP" id="MF_00388">
    <property type="entry name" value="LpxC"/>
    <property type="match status" value="1"/>
</dbReference>
<dbReference type="InterPro" id="IPR020568">
    <property type="entry name" value="Ribosomal_Su5_D2-typ_SF"/>
</dbReference>
<dbReference type="InterPro" id="IPR004463">
    <property type="entry name" value="UDP-acyl_GlcNac_deAcase"/>
</dbReference>
<dbReference type="InterPro" id="IPR011334">
    <property type="entry name" value="UDP-acyl_GlcNac_deAcase_C"/>
</dbReference>
<dbReference type="InterPro" id="IPR015870">
    <property type="entry name" value="UDP-acyl_N-AcGlcN_deAcase_N"/>
</dbReference>
<dbReference type="NCBIfam" id="TIGR00325">
    <property type="entry name" value="lpxC"/>
    <property type="match status" value="1"/>
</dbReference>
<dbReference type="PANTHER" id="PTHR33694">
    <property type="entry name" value="UDP-3-O-ACYL-N-ACETYLGLUCOSAMINE DEACETYLASE 1, MITOCHONDRIAL-RELATED"/>
    <property type="match status" value="1"/>
</dbReference>
<dbReference type="PANTHER" id="PTHR33694:SF1">
    <property type="entry name" value="UDP-3-O-ACYL-N-ACETYLGLUCOSAMINE DEACETYLASE 1, MITOCHONDRIAL-RELATED"/>
    <property type="match status" value="1"/>
</dbReference>
<dbReference type="Pfam" id="PF03331">
    <property type="entry name" value="LpxC"/>
    <property type="match status" value="1"/>
</dbReference>
<dbReference type="SUPFAM" id="SSF54211">
    <property type="entry name" value="Ribosomal protein S5 domain 2-like"/>
    <property type="match status" value="2"/>
</dbReference>